<feature type="chain" id="PRO_0000082308" description="Taste receptor type 2 member 31">
    <location>
        <begin position="1"/>
        <end position="309"/>
    </location>
</feature>
<feature type="topological domain" description="Extracellular" evidence="2">
    <location>
        <begin position="1"/>
        <end position="2"/>
    </location>
</feature>
<feature type="transmembrane region" description="Helical; Name=1" evidence="2">
    <location>
        <begin position="3"/>
        <end position="23"/>
    </location>
</feature>
<feature type="topological domain" description="Cytoplasmic" evidence="2">
    <location>
        <begin position="24"/>
        <end position="55"/>
    </location>
</feature>
<feature type="transmembrane region" description="Helical; Name=2" evidence="2">
    <location>
        <begin position="56"/>
        <end position="76"/>
    </location>
</feature>
<feature type="topological domain" description="Extracellular" evidence="2">
    <location>
        <begin position="77"/>
        <end position="100"/>
    </location>
</feature>
<feature type="transmembrane region" description="Helical; Name=3" evidence="2">
    <location>
        <begin position="101"/>
        <end position="121"/>
    </location>
</feature>
<feature type="topological domain" description="Cytoplasmic" evidence="2">
    <location>
        <begin position="122"/>
        <end position="126"/>
    </location>
</feature>
<feature type="transmembrane region" description="Helical; Name=4" evidence="2">
    <location>
        <begin position="127"/>
        <end position="147"/>
    </location>
</feature>
<feature type="topological domain" description="Extracellular" evidence="2">
    <location>
        <begin position="148"/>
        <end position="181"/>
    </location>
</feature>
<feature type="transmembrane region" description="Helical; Name=5" evidence="2">
    <location>
        <begin position="182"/>
        <end position="202"/>
    </location>
</feature>
<feature type="topological domain" description="Cytoplasmic" evidence="2">
    <location>
        <begin position="203"/>
        <end position="229"/>
    </location>
</feature>
<feature type="transmembrane region" description="Helical; Name=6" evidence="2">
    <location>
        <begin position="230"/>
        <end position="250"/>
    </location>
</feature>
<feature type="topological domain" description="Extracellular" evidence="2">
    <location>
        <begin position="251"/>
        <end position="259"/>
    </location>
</feature>
<feature type="transmembrane region" description="Helical; Name=7" evidence="2">
    <location>
        <begin position="260"/>
        <end position="280"/>
    </location>
</feature>
<feature type="topological domain" description="Cytoplasmic" evidence="2">
    <location>
        <begin position="281"/>
        <end position="309"/>
    </location>
</feature>
<feature type="glycosylation site" description="N-linked (GlcNAc...) asparagine" evidence="2">
    <location>
        <position position="161"/>
    </location>
</feature>
<comment type="function">
    <text evidence="1">Receptor that may play a role in the perception of bitterness and is gustducin-linked. May play a role in sensing the chemical composition of the gastrointestinal content. The activity of this receptor may stimulate alpha gustducin, mediate PLC-beta-2 activation and lead to the gating of TRPM5 (By similarity).</text>
</comment>
<comment type="subcellular location">
    <subcellularLocation>
        <location>Membrane</location>
        <topology>Multi-pass membrane protein</topology>
    </subcellularLocation>
</comment>
<comment type="miscellaneous">
    <text>Most taste cells may be activated by a limited number of bitter compounds; individual taste cells can discriminate among bitter stimuli.</text>
</comment>
<comment type="similarity">
    <text evidence="3">Belongs to the G-protein coupled receptor T2R family.</text>
</comment>
<proteinExistence type="inferred from homology"/>
<organism>
    <name type="scientific">Gorilla gorilla gorilla</name>
    <name type="common">Western lowland gorilla</name>
    <dbReference type="NCBI Taxonomy" id="9595"/>
    <lineage>
        <taxon>Eukaryota</taxon>
        <taxon>Metazoa</taxon>
        <taxon>Chordata</taxon>
        <taxon>Craniata</taxon>
        <taxon>Vertebrata</taxon>
        <taxon>Euteleostomi</taxon>
        <taxon>Mammalia</taxon>
        <taxon>Eutheria</taxon>
        <taxon>Euarchontoglires</taxon>
        <taxon>Primates</taxon>
        <taxon>Haplorrhini</taxon>
        <taxon>Catarrhini</taxon>
        <taxon>Hominidae</taxon>
        <taxon>Gorilla</taxon>
    </lineage>
</organism>
<dbReference type="EMBL" id="AY724912">
    <property type="protein sequence ID" value="AAU21123.1"/>
    <property type="molecule type" value="Genomic_DNA"/>
</dbReference>
<dbReference type="FunCoup" id="Q645Z6">
    <property type="interactions" value="214"/>
</dbReference>
<dbReference type="GlyCosmos" id="Q645Z6">
    <property type="glycosylation" value="1 site, No reported glycans"/>
</dbReference>
<dbReference type="InParanoid" id="Q645Z6"/>
<dbReference type="Proteomes" id="UP000001519">
    <property type="component" value="Unplaced"/>
</dbReference>
<dbReference type="GO" id="GO:0016020">
    <property type="term" value="C:membrane"/>
    <property type="evidence" value="ECO:0000318"/>
    <property type="project" value="GO_Central"/>
</dbReference>
<dbReference type="GO" id="GO:0005886">
    <property type="term" value="C:plasma membrane"/>
    <property type="evidence" value="ECO:0007669"/>
    <property type="project" value="UniProtKB-ARBA"/>
</dbReference>
<dbReference type="GO" id="GO:0033038">
    <property type="term" value="F:bitter taste receptor activity"/>
    <property type="evidence" value="ECO:0000318"/>
    <property type="project" value="GO_Central"/>
</dbReference>
<dbReference type="GO" id="GO:0004930">
    <property type="term" value="F:G protein-coupled receptor activity"/>
    <property type="evidence" value="ECO:0007669"/>
    <property type="project" value="UniProtKB-KW"/>
</dbReference>
<dbReference type="GO" id="GO:0001580">
    <property type="term" value="P:detection of chemical stimulus involved in sensory perception of bitter taste"/>
    <property type="evidence" value="ECO:0000318"/>
    <property type="project" value="GO_Central"/>
</dbReference>
<dbReference type="CDD" id="cd15027">
    <property type="entry name" value="7tm_TAS2R43-like"/>
    <property type="match status" value="1"/>
</dbReference>
<dbReference type="FunFam" id="1.20.1070.10:FF:000042">
    <property type="entry name" value="Taste receptor type 2 member 7"/>
    <property type="match status" value="1"/>
</dbReference>
<dbReference type="Gene3D" id="1.20.1070.10">
    <property type="entry name" value="Rhodopsin 7-helix transmembrane proteins"/>
    <property type="match status" value="1"/>
</dbReference>
<dbReference type="InterPro" id="IPR007960">
    <property type="entry name" value="TAS2R"/>
</dbReference>
<dbReference type="PANTHER" id="PTHR11394">
    <property type="entry name" value="TASTE RECEPTOR TYPE 2"/>
    <property type="match status" value="1"/>
</dbReference>
<dbReference type="PANTHER" id="PTHR11394:SF129">
    <property type="entry name" value="TASTE RECEPTOR TYPE 2 MEMBER 31"/>
    <property type="match status" value="1"/>
</dbReference>
<dbReference type="Pfam" id="PF05296">
    <property type="entry name" value="TAS2R"/>
    <property type="match status" value="1"/>
</dbReference>
<dbReference type="SUPFAM" id="SSF81321">
    <property type="entry name" value="Family A G protein-coupled receptor-like"/>
    <property type="match status" value="1"/>
</dbReference>
<evidence type="ECO:0000250" key="1"/>
<evidence type="ECO:0000255" key="2"/>
<evidence type="ECO:0000305" key="3"/>
<gene>
    <name type="primary">TAS2R31</name>
    <name type="synonym">TAS2R44</name>
</gene>
<name>T2R31_GORGO</name>
<accession>Q645Z6</accession>
<protein>
    <recommendedName>
        <fullName>Taste receptor type 2 member 31</fullName>
        <shortName>T2R31</shortName>
    </recommendedName>
    <alternativeName>
        <fullName>Taste receptor type 2 member 44</fullName>
        <shortName>T2R44</shortName>
    </alternativeName>
</protein>
<sequence length="309" mass="35154">MTTFIPIIFSSLVMVMFVTGNFANGFIALVNSIESVKRQKISYADQILTALAVSRIGLLWVLLLNWYSTVLNPAFYSVEVRTTAYNVWAVTGHFSNWLATSLSIFYLLKIANFSNLIFLHLKRRVKSVILVMLLGPLLFLACQLFVINMKEIVQTKEYEGNXTWKIKLRSAVYLSDATVTTLGNLVPFTLTLLCFLLLICSLCKHLKKMQLHGKGSQDPSMKVHIKALQTVTSFLLLCAIYFLSIMISVWSLGSLKNKPVFMFCKAMRFSYPSIHPFILIWGNKKLKQTFLSVLQQVRYWVKGEKPSSP</sequence>
<reference key="1">
    <citation type="journal article" date="2005" name="Mol. Biol. Evol.">
        <title>Evolution of bitter taste receptors in humans and apes.</title>
        <authorList>
            <person name="Fischer A."/>
            <person name="Gilad Y."/>
            <person name="Man O."/>
            <person name="Paeaebo S."/>
        </authorList>
    </citation>
    <scope>NUCLEOTIDE SEQUENCE [GENOMIC DNA]</scope>
</reference>
<keyword id="KW-0297">G-protein coupled receptor</keyword>
<keyword id="KW-0325">Glycoprotein</keyword>
<keyword id="KW-0472">Membrane</keyword>
<keyword id="KW-0675">Receptor</keyword>
<keyword id="KW-1185">Reference proteome</keyword>
<keyword id="KW-0716">Sensory transduction</keyword>
<keyword id="KW-0919">Taste</keyword>
<keyword id="KW-0807">Transducer</keyword>
<keyword id="KW-0812">Transmembrane</keyword>
<keyword id="KW-1133">Transmembrane helix</keyword>